<organism>
    <name type="scientific">Sinorhizobium fredii (strain NBRC 101917 / NGR234)</name>
    <dbReference type="NCBI Taxonomy" id="394"/>
    <lineage>
        <taxon>Bacteria</taxon>
        <taxon>Pseudomonadati</taxon>
        <taxon>Pseudomonadota</taxon>
        <taxon>Alphaproteobacteria</taxon>
        <taxon>Hyphomicrobiales</taxon>
        <taxon>Rhizobiaceae</taxon>
        <taxon>Sinorhizobium/Ensifer group</taxon>
        <taxon>Sinorhizobium</taxon>
    </lineage>
</organism>
<protein>
    <recommendedName>
        <fullName evidence="1">ATP phosphoribosyltransferase regulatory subunit</fullName>
    </recommendedName>
</protein>
<keyword id="KW-0028">Amino-acid biosynthesis</keyword>
<keyword id="KW-0963">Cytoplasm</keyword>
<keyword id="KW-0368">Histidine biosynthesis</keyword>
<keyword id="KW-1185">Reference proteome</keyword>
<name>HISZ_SINFN</name>
<evidence type="ECO:0000255" key="1">
    <source>
        <dbReference type="HAMAP-Rule" id="MF_00125"/>
    </source>
</evidence>
<proteinExistence type="inferred from homology"/>
<feature type="chain" id="PRO_1000122674" description="ATP phosphoribosyltransferase regulatory subunit">
    <location>
        <begin position="1"/>
        <end position="379"/>
    </location>
</feature>
<accession>C3MGT3</accession>
<sequence>MPLINLPAFAGDLLADFERLKTLRVDTPVIQPAEPFLDMAGEDLRRRIFMTQSETGDSLCLRPEFTIPVCLRHIETATGTPQRYAYLGEVFRQRREGSSEFYQAGIEDLGDTDTAGADARAIGDAMRVLSNRLANRRLKVTLGDQSVFEAVIAACGLPGGWQKRLIHAFGDPKQLQKLLGELADPKSPGVFGHEVERLAILGILDDEERLVAHLAETMEATGYSTNASRSPRDIARRLKEKMELATTRLDRAALAVMREFLAFDLPLSEAPAALHAFAKKSRLKIDDALSLFDARVAAIAKVGAESDLIRYRAAFGRPLDYYTGLVFEIEAEGAPAVLAGGGRFDRLLTLLGAREHIPAVGFSLWLDRIERAIAAAGGA</sequence>
<reference key="1">
    <citation type="journal article" date="2009" name="Appl. Environ. Microbiol.">
        <title>Rhizobium sp. strain NGR234 possesses a remarkable number of secretion systems.</title>
        <authorList>
            <person name="Schmeisser C."/>
            <person name="Liesegang H."/>
            <person name="Krysciak D."/>
            <person name="Bakkou N."/>
            <person name="Le Quere A."/>
            <person name="Wollherr A."/>
            <person name="Heinemeyer I."/>
            <person name="Morgenstern B."/>
            <person name="Pommerening-Roeser A."/>
            <person name="Flores M."/>
            <person name="Palacios R."/>
            <person name="Brenner S."/>
            <person name="Gottschalk G."/>
            <person name="Schmitz R.A."/>
            <person name="Broughton W.J."/>
            <person name="Perret X."/>
            <person name="Strittmatter A.W."/>
            <person name="Streit W.R."/>
        </authorList>
    </citation>
    <scope>NUCLEOTIDE SEQUENCE [LARGE SCALE GENOMIC DNA]</scope>
    <source>
        <strain>NBRC 101917 / NGR234</strain>
    </source>
</reference>
<comment type="function">
    <text evidence="1">Required for the first step of histidine biosynthesis. May allow the feedback regulation of ATP phosphoribosyltransferase activity by histidine.</text>
</comment>
<comment type="pathway">
    <text evidence="1">Amino-acid biosynthesis; L-histidine biosynthesis; L-histidine from 5-phospho-alpha-D-ribose 1-diphosphate: step 1/9.</text>
</comment>
<comment type="subunit">
    <text evidence="1">Heteromultimer composed of HisG and HisZ subunits.</text>
</comment>
<comment type="subcellular location">
    <subcellularLocation>
        <location evidence="1">Cytoplasm</location>
    </subcellularLocation>
</comment>
<comment type="miscellaneous">
    <text>This function is generally fulfilled by the C-terminal part of HisG, which is missing in some bacteria such as this one.</text>
</comment>
<comment type="similarity">
    <text evidence="1">Belongs to the class-II aminoacyl-tRNA synthetase family. HisZ subfamily.</text>
</comment>
<gene>
    <name evidence="1" type="primary">hisZ</name>
    <name type="ordered locus">NGR_c04020</name>
</gene>
<dbReference type="EMBL" id="CP001389">
    <property type="protein sequence ID" value="ACP24198.1"/>
    <property type="molecule type" value="Genomic_DNA"/>
</dbReference>
<dbReference type="RefSeq" id="WP_012706983.1">
    <property type="nucleotide sequence ID" value="NC_012587.1"/>
</dbReference>
<dbReference type="RefSeq" id="YP_002824951.1">
    <property type="nucleotide sequence ID" value="NC_012587.1"/>
</dbReference>
<dbReference type="SMR" id="C3MGT3"/>
<dbReference type="STRING" id="394.NGR_c04020"/>
<dbReference type="KEGG" id="rhi:NGR_c04020"/>
<dbReference type="PATRIC" id="fig|394.7.peg.3208"/>
<dbReference type="eggNOG" id="COG3705">
    <property type="taxonomic scope" value="Bacteria"/>
</dbReference>
<dbReference type="HOGENOM" id="CLU_025113_6_0_5"/>
<dbReference type="OrthoDB" id="9797914at2"/>
<dbReference type="UniPathway" id="UPA00031">
    <property type="reaction ID" value="UER00006"/>
</dbReference>
<dbReference type="Proteomes" id="UP000001054">
    <property type="component" value="Chromosome"/>
</dbReference>
<dbReference type="GO" id="GO:0005737">
    <property type="term" value="C:cytoplasm"/>
    <property type="evidence" value="ECO:0007669"/>
    <property type="project" value="UniProtKB-SubCell"/>
</dbReference>
<dbReference type="GO" id="GO:0004821">
    <property type="term" value="F:histidine-tRNA ligase activity"/>
    <property type="evidence" value="ECO:0007669"/>
    <property type="project" value="TreeGrafter"/>
</dbReference>
<dbReference type="GO" id="GO:0006427">
    <property type="term" value="P:histidyl-tRNA aminoacylation"/>
    <property type="evidence" value="ECO:0007669"/>
    <property type="project" value="TreeGrafter"/>
</dbReference>
<dbReference type="GO" id="GO:0000105">
    <property type="term" value="P:L-histidine biosynthetic process"/>
    <property type="evidence" value="ECO:0007669"/>
    <property type="project" value="UniProtKB-UniRule"/>
</dbReference>
<dbReference type="Gene3D" id="3.30.930.10">
    <property type="entry name" value="Bira Bifunctional Protein, Domain 2"/>
    <property type="match status" value="1"/>
</dbReference>
<dbReference type="HAMAP" id="MF_00125">
    <property type="entry name" value="HisZ"/>
    <property type="match status" value="1"/>
</dbReference>
<dbReference type="InterPro" id="IPR045864">
    <property type="entry name" value="aa-tRNA-synth_II/BPL/LPL"/>
</dbReference>
<dbReference type="InterPro" id="IPR041715">
    <property type="entry name" value="HisRS-like_core"/>
</dbReference>
<dbReference type="InterPro" id="IPR004516">
    <property type="entry name" value="HisRS/HisZ"/>
</dbReference>
<dbReference type="InterPro" id="IPR004517">
    <property type="entry name" value="HisZ"/>
</dbReference>
<dbReference type="NCBIfam" id="NF008951">
    <property type="entry name" value="PRK12295.1-4"/>
    <property type="match status" value="1"/>
</dbReference>
<dbReference type="PANTHER" id="PTHR43707:SF1">
    <property type="entry name" value="HISTIDINE--TRNA LIGASE, MITOCHONDRIAL-RELATED"/>
    <property type="match status" value="1"/>
</dbReference>
<dbReference type="PANTHER" id="PTHR43707">
    <property type="entry name" value="HISTIDYL-TRNA SYNTHETASE"/>
    <property type="match status" value="1"/>
</dbReference>
<dbReference type="Pfam" id="PF13393">
    <property type="entry name" value="tRNA-synt_His"/>
    <property type="match status" value="2"/>
</dbReference>
<dbReference type="PIRSF" id="PIRSF001549">
    <property type="entry name" value="His-tRNA_synth"/>
    <property type="match status" value="1"/>
</dbReference>
<dbReference type="SUPFAM" id="SSF55681">
    <property type="entry name" value="Class II aaRS and biotin synthetases"/>
    <property type="match status" value="1"/>
</dbReference>